<dbReference type="EMBL" id="X92648">
    <property type="protein sequence ID" value="CAA63340.1"/>
    <property type="molecule type" value="mRNA"/>
</dbReference>
<dbReference type="PIR" id="S71564">
    <property type="entry name" value="S71564"/>
</dbReference>
<dbReference type="SMR" id="Q39950"/>
<dbReference type="GO" id="GO:0008289">
    <property type="term" value="F:lipid binding"/>
    <property type="evidence" value="ECO:0007669"/>
    <property type="project" value="UniProtKB-KW"/>
</dbReference>
<dbReference type="GO" id="GO:0006869">
    <property type="term" value="P:lipid transport"/>
    <property type="evidence" value="ECO:0007669"/>
    <property type="project" value="InterPro"/>
</dbReference>
<dbReference type="CDD" id="cd01960">
    <property type="entry name" value="nsLTP1"/>
    <property type="match status" value="1"/>
</dbReference>
<dbReference type="FunFam" id="1.10.110.10:FF:000002">
    <property type="entry name" value="Non-specific lipid-transfer protein"/>
    <property type="match status" value="1"/>
</dbReference>
<dbReference type="Gene3D" id="1.10.110.10">
    <property type="entry name" value="Plant lipid-transfer and hydrophobic proteins"/>
    <property type="match status" value="1"/>
</dbReference>
<dbReference type="InterPro" id="IPR036312">
    <property type="entry name" value="Bifun_inhib/LTP/seed_sf"/>
</dbReference>
<dbReference type="InterPro" id="IPR016140">
    <property type="entry name" value="Bifunc_inhib/LTP/seed_store"/>
</dbReference>
<dbReference type="InterPro" id="IPR000528">
    <property type="entry name" value="Plant_nsLTP"/>
</dbReference>
<dbReference type="PANTHER" id="PTHR33076">
    <property type="entry name" value="NON-SPECIFIC LIPID-TRANSFER PROTEIN 2-RELATED"/>
    <property type="match status" value="1"/>
</dbReference>
<dbReference type="Pfam" id="PF00234">
    <property type="entry name" value="Tryp_alpha_amyl"/>
    <property type="match status" value="1"/>
</dbReference>
<dbReference type="PRINTS" id="PR00382">
    <property type="entry name" value="LIPIDTRNSFER"/>
</dbReference>
<dbReference type="SMART" id="SM00499">
    <property type="entry name" value="AAI"/>
    <property type="match status" value="1"/>
</dbReference>
<dbReference type="SUPFAM" id="SSF47699">
    <property type="entry name" value="Bifunctional inhibitor/lipid-transfer protein/seed storage 2S albumin"/>
    <property type="match status" value="1"/>
</dbReference>
<proteinExistence type="inferred from homology"/>
<evidence type="ECO:0000250" key="1"/>
<evidence type="ECO:0000255" key="2"/>
<evidence type="ECO:0000305" key="3"/>
<sequence length="116" mass="11551">MAKMAMMVLCAGVTCMVVGAPYTEALSCGQVSSSLAPCISYLTKGGAVPPACCSGVKSLNSAAKTTPDRQAACGCLKSAYNSISGVNAGNAASFPGKCGVSIPYKISPSTDCSKVQ</sequence>
<protein>
    <recommendedName>
        <fullName>Non-specific lipid-transfer protein</fullName>
        <shortName>LTP</shortName>
        <shortName>NsLTP</shortName>
    </recommendedName>
    <alternativeName>
        <fullName>SDI-9</fullName>
    </alternativeName>
</protein>
<feature type="signal peptide" evidence="2">
    <location>
        <begin position="1"/>
        <end position="25"/>
    </location>
</feature>
<feature type="chain" id="PRO_0000018380" description="Non-specific lipid-transfer protein">
    <location>
        <begin position="26"/>
        <end position="116"/>
    </location>
</feature>
<feature type="disulfide bond" evidence="1">
    <location>
        <begin position="28"/>
        <end position="75"/>
    </location>
</feature>
<feature type="disulfide bond" evidence="1">
    <location>
        <begin position="38"/>
        <end position="52"/>
    </location>
</feature>
<feature type="disulfide bond" evidence="1">
    <location>
        <begin position="53"/>
        <end position="98"/>
    </location>
</feature>
<feature type="disulfide bond" evidence="1">
    <location>
        <begin position="73"/>
        <end position="112"/>
    </location>
</feature>
<name>NLTP_HELAN</name>
<comment type="function">
    <text evidence="1">Plant non-specific lipid-transfer proteins transfer phospholipids as well as galactolipids across membranes. May play a role in wax or cutin deposition in the cell walls of expanding epidermal cells and certain secretory tissues (By similarity).</text>
</comment>
<comment type="similarity">
    <text evidence="3">Belongs to the plant LTP family.</text>
</comment>
<organism>
    <name type="scientific">Helianthus annuus</name>
    <name type="common">Common sunflower</name>
    <dbReference type="NCBI Taxonomy" id="4232"/>
    <lineage>
        <taxon>Eukaryota</taxon>
        <taxon>Viridiplantae</taxon>
        <taxon>Streptophyta</taxon>
        <taxon>Embryophyta</taxon>
        <taxon>Tracheophyta</taxon>
        <taxon>Spermatophyta</taxon>
        <taxon>Magnoliopsida</taxon>
        <taxon>eudicotyledons</taxon>
        <taxon>Gunneridae</taxon>
        <taxon>Pentapetalae</taxon>
        <taxon>asterids</taxon>
        <taxon>campanulids</taxon>
        <taxon>Asterales</taxon>
        <taxon>Asteraceae</taxon>
        <taxon>Asteroideae</taxon>
        <taxon>Heliantheae alliance</taxon>
        <taxon>Heliantheae</taxon>
        <taxon>Helianthus</taxon>
    </lineage>
</organism>
<keyword id="KW-1015">Disulfide bond</keyword>
<keyword id="KW-0446">Lipid-binding</keyword>
<keyword id="KW-0732">Signal</keyword>
<keyword id="KW-0813">Transport</keyword>
<accession>Q39950</accession>
<reference key="1">
    <citation type="journal article" date="1996" name="Plant Mol. Biol.">
        <title>Identification and expression of water stress- and abscisic acid-regulated genes in a drought-tolerant sunflower genotype.</title>
        <authorList>
            <person name="Ouvrard O."/>
            <person name="Cellier F."/>
            <person name="Ferrare K."/>
            <person name="Tousch D."/>
            <person name="Lamaze T."/>
            <person name="Dupuis J.M."/>
            <person name="Casse-Delbart F."/>
        </authorList>
    </citation>
    <scope>NUCLEOTIDE SEQUENCE [MRNA]</scope>
    <source>
        <tissue>Leaf</tissue>
    </source>
</reference>